<evidence type="ECO:0000255" key="1">
    <source>
        <dbReference type="HAMAP-Rule" id="MF_01864"/>
    </source>
</evidence>
<evidence type="ECO:0000255" key="2">
    <source>
        <dbReference type="PROSITE-ProRule" id="PRU01266"/>
    </source>
</evidence>
<protein>
    <recommendedName>
        <fullName evidence="1">tRNA-2-methylthio-N(6)-dimethylallyladenosine synthase</fullName>
        <ecNumber evidence="1">2.8.4.3</ecNumber>
    </recommendedName>
    <alternativeName>
        <fullName evidence="1">(Dimethylallyl)adenosine tRNA methylthiotransferase MiaB</fullName>
    </alternativeName>
    <alternativeName>
        <fullName evidence="1">tRNA-i(6)A37 methylthiotransferase</fullName>
    </alternativeName>
</protein>
<name>MIAB_RHIWR</name>
<sequence length="453" mass="48680">MGRGMSRPAPKSFHVKSFGCQMNVYDGARMAELLEAQGMHAADSADAADLVVLNTCHIREKAAEKVYSDIGRIVKKAADAEEGRARPMIAVAGCVAQAEGPEIPRRAPAVDIVVGPQAYHNLPQLVADAAEGRRALDTDMPAASKFDTLPKRRRQGPTAFLTVQEGCDKFCTYCVVPYTRGAEISRPWGAIVDEAKALVDAGAREITLLGQNVNAWTGEDDRGRTQGLDGLIRALDALPGLARIRYTTSHPNDMSDGLIAAHGEVAKLMPFLHLPVQAGSDRILKAMNRSHDAAGYLRLIERVRAARPDIAVSGDFIVGFPGETDEDFEATLAIVRAVDHAQAFSFKYSPRPGTPAASMDGQVAPAVMDERLQRLQALLNEQQHRFNLATVGKRCEVLIERDGKKPGQRIGKSPWLQSVIVEDGPAIGTLVTVDIVSAGPNSLSGALVEQKAA</sequence>
<accession>A5V8Y0</accession>
<proteinExistence type="inferred from homology"/>
<feature type="chain" id="PRO_0000374562" description="tRNA-2-methylthio-N(6)-dimethylallyladenosine synthase">
    <location>
        <begin position="1"/>
        <end position="453"/>
    </location>
</feature>
<feature type="domain" description="MTTase N-terminal" evidence="1">
    <location>
        <begin position="11"/>
        <end position="131"/>
    </location>
</feature>
<feature type="domain" description="Radical SAM core" evidence="2">
    <location>
        <begin position="153"/>
        <end position="385"/>
    </location>
</feature>
<feature type="domain" description="TRAM" evidence="1">
    <location>
        <begin position="388"/>
        <end position="449"/>
    </location>
</feature>
<feature type="binding site" evidence="1">
    <location>
        <position position="20"/>
    </location>
    <ligand>
        <name>[4Fe-4S] cluster</name>
        <dbReference type="ChEBI" id="CHEBI:49883"/>
        <label>1</label>
    </ligand>
</feature>
<feature type="binding site" evidence="1">
    <location>
        <position position="56"/>
    </location>
    <ligand>
        <name>[4Fe-4S] cluster</name>
        <dbReference type="ChEBI" id="CHEBI:49883"/>
        <label>1</label>
    </ligand>
</feature>
<feature type="binding site" evidence="1">
    <location>
        <position position="94"/>
    </location>
    <ligand>
        <name>[4Fe-4S] cluster</name>
        <dbReference type="ChEBI" id="CHEBI:49883"/>
        <label>1</label>
    </ligand>
</feature>
<feature type="binding site" evidence="1">
    <location>
        <position position="167"/>
    </location>
    <ligand>
        <name>[4Fe-4S] cluster</name>
        <dbReference type="ChEBI" id="CHEBI:49883"/>
        <label>2</label>
        <note>4Fe-4S-S-AdoMet</note>
    </ligand>
</feature>
<feature type="binding site" evidence="1">
    <location>
        <position position="171"/>
    </location>
    <ligand>
        <name>[4Fe-4S] cluster</name>
        <dbReference type="ChEBI" id="CHEBI:49883"/>
        <label>2</label>
        <note>4Fe-4S-S-AdoMet</note>
    </ligand>
</feature>
<feature type="binding site" evidence="1">
    <location>
        <position position="174"/>
    </location>
    <ligand>
        <name>[4Fe-4S] cluster</name>
        <dbReference type="ChEBI" id="CHEBI:49883"/>
        <label>2</label>
        <note>4Fe-4S-S-AdoMet</note>
    </ligand>
</feature>
<organism>
    <name type="scientific">Rhizorhabdus wittichii (strain DSM 6014 / CCUG 31198 / JCM 15750 / NBRC 105917 / EY 4224 / RW1)</name>
    <name type="common">Sphingomonas wittichii</name>
    <dbReference type="NCBI Taxonomy" id="392499"/>
    <lineage>
        <taxon>Bacteria</taxon>
        <taxon>Pseudomonadati</taxon>
        <taxon>Pseudomonadota</taxon>
        <taxon>Alphaproteobacteria</taxon>
        <taxon>Sphingomonadales</taxon>
        <taxon>Sphingomonadaceae</taxon>
        <taxon>Rhizorhabdus</taxon>
    </lineage>
</organism>
<keyword id="KW-0004">4Fe-4S</keyword>
<keyword id="KW-0963">Cytoplasm</keyword>
<keyword id="KW-0408">Iron</keyword>
<keyword id="KW-0411">Iron-sulfur</keyword>
<keyword id="KW-0479">Metal-binding</keyword>
<keyword id="KW-1185">Reference proteome</keyword>
<keyword id="KW-0949">S-adenosyl-L-methionine</keyword>
<keyword id="KW-0808">Transferase</keyword>
<keyword id="KW-0819">tRNA processing</keyword>
<gene>
    <name evidence="1" type="primary">miaB</name>
    <name type="ordered locus">Swit_2387</name>
</gene>
<dbReference type="EC" id="2.8.4.3" evidence="1"/>
<dbReference type="EMBL" id="CP000699">
    <property type="protein sequence ID" value="ABQ68746.1"/>
    <property type="molecule type" value="Genomic_DNA"/>
</dbReference>
<dbReference type="SMR" id="A5V8Y0"/>
<dbReference type="STRING" id="392499.Swit_2387"/>
<dbReference type="PaxDb" id="392499-Swit_2387"/>
<dbReference type="KEGG" id="swi:Swit_2387"/>
<dbReference type="eggNOG" id="COG0621">
    <property type="taxonomic scope" value="Bacteria"/>
</dbReference>
<dbReference type="HOGENOM" id="CLU_018697_2_0_5"/>
<dbReference type="OrthoDB" id="9805215at2"/>
<dbReference type="Proteomes" id="UP000001989">
    <property type="component" value="Chromosome"/>
</dbReference>
<dbReference type="GO" id="GO:0005829">
    <property type="term" value="C:cytosol"/>
    <property type="evidence" value="ECO:0007669"/>
    <property type="project" value="TreeGrafter"/>
</dbReference>
<dbReference type="GO" id="GO:0051539">
    <property type="term" value="F:4 iron, 4 sulfur cluster binding"/>
    <property type="evidence" value="ECO:0007669"/>
    <property type="project" value="UniProtKB-UniRule"/>
</dbReference>
<dbReference type="GO" id="GO:0046872">
    <property type="term" value="F:metal ion binding"/>
    <property type="evidence" value="ECO:0007669"/>
    <property type="project" value="UniProtKB-KW"/>
</dbReference>
<dbReference type="GO" id="GO:0035597">
    <property type="term" value="F:N6-isopentenyladenosine methylthiotransferase activity"/>
    <property type="evidence" value="ECO:0007669"/>
    <property type="project" value="TreeGrafter"/>
</dbReference>
<dbReference type="CDD" id="cd01335">
    <property type="entry name" value="Radical_SAM"/>
    <property type="match status" value="1"/>
</dbReference>
<dbReference type="FunFam" id="3.40.50.12160:FF:000003">
    <property type="entry name" value="CDK5 regulatory subunit-associated protein 1"/>
    <property type="match status" value="1"/>
</dbReference>
<dbReference type="FunFam" id="3.80.30.20:FF:000001">
    <property type="entry name" value="tRNA-2-methylthio-N(6)-dimethylallyladenosine synthase 2"/>
    <property type="match status" value="1"/>
</dbReference>
<dbReference type="Gene3D" id="3.40.50.12160">
    <property type="entry name" value="Methylthiotransferase, N-terminal domain"/>
    <property type="match status" value="1"/>
</dbReference>
<dbReference type="Gene3D" id="3.80.30.20">
    <property type="entry name" value="tm_1862 like domain"/>
    <property type="match status" value="1"/>
</dbReference>
<dbReference type="HAMAP" id="MF_01864">
    <property type="entry name" value="tRNA_metthiotr_MiaB"/>
    <property type="match status" value="1"/>
</dbReference>
<dbReference type="InterPro" id="IPR006638">
    <property type="entry name" value="Elp3/MiaA/NifB-like_rSAM"/>
</dbReference>
<dbReference type="InterPro" id="IPR005839">
    <property type="entry name" value="Methylthiotransferase"/>
</dbReference>
<dbReference type="InterPro" id="IPR020612">
    <property type="entry name" value="Methylthiotransferase_CS"/>
</dbReference>
<dbReference type="InterPro" id="IPR013848">
    <property type="entry name" value="Methylthiotransferase_N"/>
</dbReference>
<dbReference type="InterPro" id="IPR038135">
    <property type="entry name" value="Methylthiotransferase_N_sf"/>
</dbReference>
<dbReference type="InterPro" id="IPR006463">
    <property type="entry name" value="MiaB_methiolase"/>
</dbReference>
<dbReference type="InterPro" id="IPR007197">
    <property type="entry name" value="rSAM"/>
</dbReference>
<dbReference type="InterPro" id="IPR023404">
    <property type="entry name" value="rSAM_horseshoe"/>
</dbReference>
<dbReference type="InterPro" id="IPR002792">
    <property type="entry name" value="TRAM_dom"/>
</dbReference>
<dbReference type="NCBIfam" id="TIGR01574">
    <property type="entry name" value="miaB-methiolase"/>
    <property type="match status" value="1"/>
</dbReference>
<dbReference type="NCBIfam" id="TIGR00089">
    <property type="entry name" value="MiaB/RimO family radical SAM methylthiotransferase"/>
    <property type="match status" value="1"/>
</dbReference>
<dbReference type="PANTHER" id="PTHR43020">
    <property type="entry name" value="CDK5 REGULATORY SUBUNIT-ASSOCIATED PROTEIN 1"/>
    <property type="match status" value="1"/>
</dbReference>
<dbReference type="PANTHER" id="PTHR43020:SF2">
    <property type="entry name" value="MITOCHONDRIAL TRNA METHYLTHIOTRANSFERASE CDK5RAP1"/>
    <property type="match status" value="1"/>
</dbReference>
<dbReference type="Pfam" id="PF04055">
    <property type="entry name" value="Radical_SAM"/>
    <property type="match status" value="1"/>
</dbReference>
<dbReference type="Pfam" id="PF01938">
    <property type="entry name" value="TRAM"/>
    <property type="match status" value="1"/>
</dbReference>
<dbReference type="Pfam" id="PF00919">
    <property type="entry name" value="UPF0004"/>
    <property type="match status" value="1"/>
</dbReference>
<dbReference type="SFLD" id="SFLDF00273">
    <property type="entry name" value="(dimethylallyl)adenosine_tRNA"/>
    <property type="match status" value="1"/>
</dbReference>
<dbReference type="SFLD" id="SFLDG01082">
    <property type="entry name" value="B12-binding_domain_containing"/>
    <property type="match status" value="1"/>
</dbReference>
<dbReference type="SFLD" id="SFLDG01061">
    <property type="entry name" value="methylthiotransferase"/>
    <property type="match status" value="1"/>
</dbReference>
<dbReference type="SMART" id="SM00729">
    <property type="entry name" value="Elp3"/>
    <property type="match status" value="1"/>
</dbReference>
<dbReference type="SUPFAM" id="SSF102114">
    <property type="entry name" value="Radical SAM enzymes"/>
    <property type="match status" value="1"/>
</dbReference>
<dbReference type="PROSITE" id="PS51449">
    <property type="entry name" value="MTTASE_N"/>
    <property type="match status" value="1"/>
</dbReference>
<dbReference type="PROSITE" id="PS01278">
    <property type="entry name" value="MTTASE_RADICAL"/>
    <property type="match status" value="1"/>
</dbReference>
<dbReference type="PROSITE" id="PS51918">
    <property type="entry name" value="RADICAL_SAM"/>
    <property type="match status" value="1"/>
</dbReference>
<dbReference type="PROSITE" id="PS50926">
    <property type="entry name" value="TRAM"/>
    <property type="match status" value="1"/>
</dbReference>
<reference key="1">
    <citation type="journal article" date="2010" name="J. Bacteriol.">
        <title>Genome sequence of the dioxin-mineralizing bacterium Sphingomonas wittichii RW1.</title>
        <authorList>
            <person name="Miller T.R."/>
            <person name="Delcher A.L."/>
            <person name="Salzberg S.L."/>
            <person name="Saunders E."/>
            <person name="Detter J.C."/>
            <person name="Halden R.U."/>
        </authorList>
    </citation>
    <scope>NUCLEOTIDE SEQUENCE [LARGE SCALE GENOMIC DNA]</scope>
    <source>
        <strain>DSM 6014 / CCUG 31198 / JCM 15750 / NBRC 105917 / EY 4224 / RW1</strain>
    </source>
</reference>
<comment type="function">
    <text evidence="1">Catalyzes the methylthiolation of N6-(dimethylallyl)adenosine (i(6)A), leading to the formation of 2-methylthio-N6-(dimethylallyl)adenosine (ms(2)i(6)A) at position 37 in tRNAs that read codons beginning with uridine.</text>
</comment>
<comment type="catalytic activity">
    <reaction evidence="1">
        <text>N(6)-dimethylallyladenosine(37) in tRNA + (sulfur carrier)-SH + AH2 + 2 S-adenosyl-L-methionine = 2-methylsulfanyl-N(6)-dimethylallyladenosine(37) in tRNA + (sulfur carrier)-H + 5'-deoxyadenosine + L-methionine + A + S-adenosyl-L-homocysteine + 2 H(+)</text>
        <dbReference type="Rhea" id="RHEA:37067"/>
        <dbReference type="Rhea" id="RHEA-COMP:10375"/>
        <dbReference type="Rhea" id="RHEA-COMP:10376"/>
        <dbReference type="Rhea" id="RHEA-COMP:14737"/>
        <dbReference type="Rhea" id="RHEA-COMP:14739"/>
        <dbReference type="ChEBI" id="CHEBI:13193"/>
        <dbReference type="ChEBI" id="CHEBI:15378"/>
        <dbReference type="ChEBI" id="CHEBI:17319"/>
        <dbReference type="ChEBI" id="CHEBI:17499"/>
        <dbReference type="ChEBI" id="CHEBI:29917"/>
        <dbReference type="ChEBI" id="CHEBI:57844"/>
        <dbReference type="ChEBI" id="CHEBI:57856"/>
        <dbReference type="ChEBI" id="CHEBI:59789"/>
        <dbReference type="ChEBI" id="CHEBI:64428"/>
        <dbReference type="ChEBI" id="CHEBI:74415"/>
        <dbReference type="ChEBI" id="CHEBI:74417"/>
        <dbReference type="EC" id="2.8.4.3"/>
    </reaction>
</comment>
<comment type="cofactor">
    <cofactor evidence="1">
        <name>[4Fe-4S] cluster</name>
        <dbReference type="ChEBI" id="CHEBI:49883"/>
    </cofactor>
    <text evidence="1">Binds 2 [4Fe-4S] clusters. One cluster is coordinated with 3 cysteines and an exchangeable S-adenosyl-L-methionine.</text>
</comment>
<comment type="subunit">
    <text evidence="1">Monomer.</text>
</comment>
<comment type="subcellular location">
    <subcellularLocation>
        <location evidence="1">Cytoplasm</location>
    </subcellularLocation>
</comment>
<comment type="similarity">
    <text evidence="1">Belongs to the methylthiotransferase family. MiaB subfamily.</text>
</comment>